<keyword id="KW-0472">Membrane</keyword>
<keyword id="KW-0576">Peroxisome</keyword>
<keyword id="KW-0962">Peroxisome biogenesis</keyword>
<keyword id="KW-1185">Reference proteome</keyword>
<keyword id="KW-0812">Transmembrane</keyword>
<keyword id="KW-1133">Transmembrane helix</keyword>
<evidence type="ECO:0000255" key="1"/>
<evidence type="ECO:0000269" key="2">
    <source>
    </source>
</evidence>
<evidence type="ECO:0000269" key="3">
    <source>
    </source>
</evidence>
<evidence type="ECO:0000269" key="4">
    <source>
    </source>
</evidence>
<evidence type="ECO:0000269" key="5">
    <source>
    </source>
</evidence>
<evidence type="ECO:0000305" key="6"/>
<proteinExistence type="evidence at protein level"/>
<accession>Q9FZF1</accession>
<accession>Q8LGI6</accession>
<comment type="function">
    <text evidence="2 3">Involved in peroxisomal proliferation. Promotes peroxisomal duplication, aggregation or elongation without fission.</text>
</comment>
<comment type="subunit">
    <text evidence="4 5">Homooligomer. Interacts with ARC5 and FIS1B on peroxisomes.</text>
</comment>
<comment type="subcellular location">
    <subcellularLocation>
        <location evidence="3 5">Peroxisome membrane</location>
        <topology evidence="3 5">Multi-pass membrane protein</topology>
    </subcellularLocation>
</comment>
<comment type="tissue specificity">
    <text evidence="2 3">Expressed in developing siliques.</text>
</comment>
<comment type="induction">
    <text evidence="3">Up-regulated during senescence.</text>
</comment>
<comment type="similarity">
    <text evidence="6">Belongs to the peroxin-11 family.</text>
</comment>
<sequence length="248" mass="27677">MATKAPEKITKPKDRDFLNHLETYLSKRDGVDKLLKISRYATKIILASSLIPETRSIIPRLKSFESSVGVSRKAFRLGKFVQDINALRSSRWDSNHELVLLIIAYGGEGLYYFVEQFIWLTKSGLIDAKHSKWLQKISAWAELVGYVGSVSIKIRDLRKLNDEESCVASTIEISVSRGLACDGEDEKMKMIKEKKTLKVLSILQDLADGLMTIADIRDGKGVLSAPNVISSAGLFSAIVSTHKNWISC</sequence>
<dbReference type="EMBL" id="AJ520106">
    <property type="protein sequence ID" value="CAD58677.1"/>
    <property type="molecule type" value="mRNA"/>
</dbReference>
<dbReference type="EMBL" id="AC012463">
    <property type="protein sequence ID" value="AAF99792.1"/>
    <property type="molecule type" value="Genomic_DNA"/>
</dbReference>
<dbReference type="EMBL" id="CP002684">
    <property type="protein sequence ID" value="AEE32208.1"/>
    <property type="molecule type" value="Genomic_DNA"/>
</dbReference>
<dbReference type="EMBL" id="BT024474">
    <property type="protein sequence ID" value="ABD19655.1"/>
    <property type="molecule type" value="mRNA"/>
</dbReference>
<dbReference type="EMBL" id="AK227048">
    <property type="protein sequence ID" value="BAE99108.1"/>
    <property type="molecule type" value="mRNA"/>
</dbReference>
<dbReference type="EMBL" id="AY084249">
    <property type="protein sequence ID" value="AAM60843.1"/>
    <property type="molecule type" value="mRNA"/>
</dbReference>
<dbReference type="PIR" id="B96518">
    <property type="entry name" value="B96518"/>
</dbReference>
<dbReference type="RefSeq" id="NP_564514.1">
    <property type="nucleotide sequence ID" value="NM_103668.3"/>
</dbReference>
<dbReference type="SMR" id="Q9FZF1"/>
<dbReference type="BioGRID" id="26411">
    <property type="interactions" value="1"/>
</dbReference>
<dbReference type="FunCoup" id="Q9FZF1">
    <property type="interactions" value="561"/>
</dbReference>
<dbReference type="STRING" id="3702.Q9FZF1"/>
<dbReference type="TCDB" id="1.A.101.1.3">
    <property type="family name" value="the peroxisomal pore-forming pex11 (pex11) family"/>
</dbReference>
<dbReference type="TCDB" id="3.A.20.1.2">
    <property type="family name" value="the peroxisomal protein importer (ppi) family"/>
</dbReference>
<dbReference type="iPTMnet" id="Q9FZF1"/>
<dbReference type="PaxDb" id="3702-AT1G47750.1"/>
<dbReference type="ProteomicsDB" id="226022"/>
<dbReference type="EnsemblPlants" id="AT1G47750.1">
    <property type="protein sequence ID" value="AT1G47750.1"/>
    <property type="gene ID" value="AT1G47750"/>
</dbReference>
<dbReference type="GeneID" id="841186"/>
<dbReference type="Gramene" id="AT1G47750.1">
    <property type="protein sequence ID" value="AT1G47750.1"/>
    <property type="gene ID" value="AT1G47750"/>
</dbReference>
<dbReference type="KEGG" id="ath:AT1G47750"/>
<dbReference type="Araport" id="AT1G47750"/>
<dbReference type="TAIR" id="AT1G47750">
    <property type="gene designation" value="PEX11A"/>
</dbReference>
<dbReference type="eggNOG" id="KOG4186">
    <property type="taxonomic scope" value="Eukaryota"/>
</dbReference>
<dbReference type="HOGENOM" id="CLU_080291_0_0_1"/>
<dbReference type="InParanoid" id="Q9FZF1"/>
<dbReference type="OMA" id="VSTHKNW"/>
<dbReference type="PhylomeDB" id="Q9FZF1"/>
<dbReference type="PRO" id="PR:Q9FZF1"/>
<dbReference type="Proteomes" id="UP000006548">
    <property type="component" value="Chromosome 1"/>
</dbReference>
<dbReference type="ExpressionAtlas" id="Q9FZF1">
    <property type="expression patterns" value="baseline and differential"/>
</dbReference>
<dbReference type="GO" id="GO:0005778">
    <property type="term" value="C:peroxisomal membrane"/>
    <property type="evidence" value="ECO:0007669"/>
    <property type="project" value="UniProtKB-SubCell"/>
</dbReference>
<dbReference type="GO" id="GO:0005777">
    <property type="term" value="C:peroxisome"/>
    <property type="evidence" value="ECO:0000314"/>
    <property type="project" value="UniProtKB"/>
</dbReference>
<dbReference type="GO" id="GO:0042802">
    <property type="term" value="F:identical protein binding"/>
    <property type="evidence" value="ECO:0000314"/>
    <property type="project" value="UniProtKB"/>
</dbReference>
<dbReference type="GO" id="GO:0016559">
    <property type="term" value="P:peroxisome fission"/>
    <property type="evidence" value="ECO:0000314"/>
    <property type="project" value="UniProtKB"/>
</dbReference>
<dbReference type="GO" id="GO:0007031">
    <property type="term" value="P:peroxisome organization"/>
    <property type="evidence" value="ECO:0000315"/>
    <property type="project" value="TAIR"/>
</dbReference>
<dbReference type="GO" id="GO:0044375">
    <property type="term" value="P:regulation of peroxisome size"/>
    <property type="evidence" value="ECO:0000314"/>
    <property type="project" value="UniProtKB"/>
</dbReference>
<dbReference type="InterPro" id="IPR008733">
    <property type="entry name" value="PEX11"/>
</dbReference>
<dbReference type="PANTHER" id="PTHR12652:SF50">
    <property type="entry name" value="PEROXIN 11"/>
    <property type="match status" value="1"/>
</dbReference>
<dbReference type="PANTHER" id="PTHR12652">
    <property type="entry name" value="PEROXISOMAL BIOGENESIS FACTOR 11"/>
    <property type="match status" value="1"/>
</dbReference>
<dbReference type="Pfam" id="PF05648">
    <property type="entry name" value="PEX11"/>
    <property type="match status" value="1"/>
</dbReference>
<gene>
    <name type="primary">PEX11A</name>
    <name type="synonym">PEX11-3</name>
    <name type="ordered locus">At1g47750</name>
    <name type="ORF">T2E6.18</name>
</gene>
<name>PX11A_ARATH</name>
<feature type="chain" id="PRO_0000330295" description="Peroxisomal membrane protein 11A">
    <location>
        <begin position="1"/>
        <end position="248"/>
    </location>
</feature>
<feature type="topological domain" description="Cytoplasmic" evidence="2">
    <location>
        <begin position="1"/>
        <end position="97"/>
    </location>
</feature>
<feature type="transmembrane region" description="Helical" evidence="1">
    <location>
        <begin position="98"/>
        <end position="118"/>
    </location>
</feature>
<feature type="topological domain" description="Lumenal" evidence="2">
    <location>
        <begin position="119"/>
        <end position="220"/>
    </location>
</feature>
<feature type="transmembrane region" description="Helical" evidence="1">
    <location>
        <begin position="221"/>
        <end position="241"/>
    </location>
</feature>
<feature type="topological domain" description="Cytoplasmic" evidence="1">
    <location>
        <begin position="242"/>
        <end position="248"/>
    </location>
</feature>
<feature type="sequence conflict" description="In Ref. 1; CAD58677 and 6; AAM60843." evidence="6" ref="1 6">
    <original>I</original>
    <variation>L</variation>
    <location>
        <position position="9"/>
    </location>
</feature>
<organism>
    <name type="scientific">Arabidopsis thaliana</name>
    <name type="common">Mouse-ear cress</name>
    <dbReference type="NCBI Taxonomy" id="3702"/>
    <lineage>
        <taxon>Eukaryota</taxon>
        <taxon>Viridiplantae</taxon>
        <taxon>Streptophyta</taxon>
        <taxon>Embryophyta</taxon>
        <taxon>Tracheophyta</taxon>
        <taxon>Spermatophyta</taxon>
        <taxon>Magnoliopsida</taxon>
        <taxon>eudicotyledons</taxon>
        <taxon>Gunneridae</taxon>
        <taxon>Pentapetalae</taxon>
        <taxon>rosids</taxon>
        <taxon>malvids</taxon>
        <taxon>Brassicales</taxon>
        <taxon>Brassicaceae</taxon>
        <taxon>Camelineae</taxon>
        <taxon>Arabidopsis</taxon>
    </lineage>
</organism>
<protein>
    <recommendedName>
        <fullName>Peroxisomal membrane protein 11A</fullName>
    </recommendedName>
    <alternativeName>
        <fullName>Peroxin-11A</fullName>
        <shortName>AtPEX11a</shortName>
    </alternativeName>
</protein>
<reference key="1">
    <citation type="submission" date="2002-12" db="EMBL/GenBank/DDBJ databases">
        <title>AtPEX11 and peroxisome proliferation in Arabidopsis thaliana.</title>
        <authorList>
            <person name="El Shami M."/>
            <person name="Baker A."/>
        </authorList>
    </citation>
    <scope>NUCLEOTIDE SEQUENCE [MRNA]</scope>
    <source>
        <tissue>Seedling</tissue>
    </source>
</reference>
<reference key="2">
    <citation type="journal article" date="2000" name="Nature">
        <title>Sequence and analysis of chromosome 1 of the plant Arabidopsis thaliana.</title>
        <authorList>
            <person name="Theologis A."/>
            <person name="Ecker J.R."/>
            <person name="Palm C.J."/>
            <person name="Federspiel N.A."/>
            <person name="Kaul S."/>
            <person name="White O."/>
            <person name="Alonso J."/>
            <person name="Altafi H."/>
            <person name="Araujo R."/>
            <person name="Bowman C.L."/>
            <person name="Brooks S.Y."/>
            <person name="Buehler E."/>
            <person name="Chan A."/>
            <person name="Chao Q."/>
            <person name="Chen H."/>
            <person name="Cheuk R.F."/>
            <person name="Chin C.W."/>
            <person name="Chung M.K."/>
            <person name="Conn L."/>
            <person name="Conway A.B."/>
            <person name="Conway A.R."/>
            <person name="Creasy T.H."/>
            <person name="Dewar K."/>
            <person name="Dunn P."/>
            <person name="Etgu P."/>
            <person name="Feldblyum T.V."/>
            <person name="Feng J.-D."/>
            <person name="Fong B."/>
            <person name="Fujii C.Y."/>
            <person name="Gill J.E."/>
            <person name="Goldsmith A.D."/>
            <person name="Haas B."/>
            <person name="Hansen N.F."/>
            <person name="Hughes B."/>
            <person name="Huizar L."/>
            <person name="Hunter J.L."/>
            <person name="Jenkins J."/>
            <person name="Johnson-Hopson C."/>
            <person name="Khan S."/>
            <person name="Khaykin E."/>
            <person name="Kim C.J."/>
            <person name="Koo H.L."/>
            <person name="Kremenetskaia I."/>
            <person name="Kurtz D.B."/>
            <person name="Kwan A."/>
            <person name="Lam B."/>
            <person name="Langin-Hooper S."/>
            <person name="Lee A."/>
            <person name="Lee J.M."/>
            <person name="Lenz C.A."/>
            <person name="Li J.H."/>
            <person name="Li Y.-P."/>
            <person name="Lin X."/>
            <person name="Liu S.X."/>
            <person name="Liu Z.A."/>
            <person name="Luros J.S."/>
            <person name="Maiti R."/>
            <person name="Marziali A."/>
            <person name="Militscher J."/>
            <person name="Miranda M."/>
            <person name="Nguyen M."/>
            <person name="Nierman W.C."/>
            <person name="Osborne B.I."/>
            <person name="Pai G."/>
            <person name="Peterson J."/>
            <person name="Pham P.K."/>
            <person name="Rizzo M."/>
            <person name="Rooney T."/>
            <person name="Rowley D."/>
            <person name="Sakano H."/>
            <person name="Salzberg S.L."/>
            <person name="Schwartz J.R."/>
            <person name="Shinn P."/>
            <person name="Southwick A.M."/>
            <person name="Sun H."/>
            <person name="Tallon L.J."/>
            <person name="Tambunga G."/>
            <person name="Toriumi M.J."/>
            <person name="Town C.D."/>
            <person name="Utterback T."/>
            <person name="Van Aken S."/>
            <person name="Vaysberg M."/>
            <person name="Vysotskaia V.S."/>
            <person name="Walker M."/>
            <person name="Wu D."/>
            <person name="Yu G."/>
            <person name="Fraser C.M."/>
            <person name="Venter J.C."/>
            <person name="Davis R.W."/>
        </authorList>
    </citation>
    <scope>NUCLEOTIDE SEQUENCE [LARGE SCALE GENOMIC DNA]</scope>
    <source>
        <strain>cv. Columbia</strain>
    </source>
</reference>
<reference key="3">
    <citation type="journal article" date="2017" name="Plant J.">
        <title>Araport11: a complete reannotation of the Arabidopsis thaliana reference genome.</title>
        <authorList>
            <person name="Cheng C.Y."/>
            <person name="Krishnakumar V."/>
            <person name="Chan A.P."/>
            <person name="Thibaud-Nissen F."/>
            <person name="Schobel S."/>
            <person name="Town C.D."/>
        </authorList>
    </citation>
    <scope>GENOME REANNOTATION</scope>
    <source>
        <strain>cv. Columbia</strain>
    </source>
</reference>
<reference key="4">
    <citation type="submission" date="2006-02" db="EMBL/GenBank/DDBJ databases">
        <title>Arabidopsis ORF clones.</title>
        <authorList>
            <person name="Shinn P."/>
            <person name="Chen H."/>
            <person name="Kim C.J."/>
            <person name="Ecker J.R."/>
        </authorList>
    </citation>
    <scope>NUCLEOTIDE SEQUENCE [LARGE SCALE MRNA]</scope>
    <source>
        <strain>cv. Columbia</strain>
    </source>
</reference>
<reference key="5">
    <citation type="submission" date="2006-07" db="EMBL/GenBank/DDBJ databases">
        <title>Large-scale analysis of RIKEN Arabidopsis full-length (RAFL) cDNAs.</title>
        <authorList>
            <person name="Totoki Y."/>
            <person name="Seki M."/>
            <person name="Ishida J."/>
            <person name="Nakajima M."/>
            <person name="Enju A."/>
            <person name="Kamiya A."/>
            <person name="Narusaka M."/>
            <person name="Shin-i T."/>
            <person name="Nakagawa M."/>
            <person name="Sakamoto N."/>
            <person name="Oishi K."/>
            <person name="Kohara Y."/>
            <person name="Kobayashi M."/>
            <person name="Toyoda A."/>
            <person name="Sakaki Y."/>
            <person name="Sakurai T."/>
            <person name="Iida K."/>
            <person name="Akiyama K."/>
            <person name="Satou M."/>
            <person name="Toyoda T."/>
            <person name="Konagaya A."/>
            <person name="Carninci P."/>
            <person name="Kawai J."/>
            <person name="Hayashizaki Y."/>
            <person name="Shinozaki K."/>
        </authorList>
    </citation>
    <scope>NUCLEOTIDE SEQUENCE [LARGE SCALE MRNA]</scope>
    <source>
        <strain>cv. Columbia</strain>
    </source>
</reference>
<reference key="6">
    <citation type="submission" date="2002-03" db="EMBL/GenBank/DDBJ databases">
        <title>Full-length cDNA from Arabidopsis thaliana.</title>
        <authorList>
            <person name="Brover V.V."/>
            <person name="Troukhan M.E."/>
            <person name="Alexandrov N.A."/>
            <person name="Lu Y.-P."/>
            <person name="Flavell R.B."/>
            <person name="Feldmann K.A."/>
        </authorList>
    </citation>
    <scope>NUCLEOTIDE SEQUENCE [LARGE SCALE MRNA]</scope>
</reference>
<reference key="7">
    <citation type="journal article" date="2006" name="J. Cell Sci.">
        <title>Five Arabidopsis peroxin 11 homologs individually promote peroxisome elongation, duplication or aggregation.</title>
        <authorList>
            <person name="Lingard M.J."/>
            <person name="Trelease R.N."/>
        </authorList>
    </citation>
    <scope>FUNCTION</scope>
    <scope>TOPOLOGY</scope>
    <scope>TISSUE SPECIFICITY</scope>
    <scope>NOMENCLATURE</scope>
</reference>
<reference key="8">
    <citation type="journal article" date="2007" name="Plant Cell">
        <title>The PEROXIN11 protein family controls peroxisome proliferation in Arabidopsis.</title>
        <authorList>
            <person name="Orth T."/>
            <person name="Reumann S."/>
            <person name="Zhang X."/>
            <person name="Fan J."/>
            <person name="Wenzel D."/>
            <person name="Quan S."/>
            <person name="Hu J."/>
        </authorList>
    </citation>
    <scope>FUNCTION</scope>
    <scope>SUBCELLULAR LOCATION</scope>
    <scope>TISSUE SPECIFICITY</scope>
    <scope>INDUCTION</scope>
    <scope>GENE FAMILY</scope>
</reference>
<reference key="9">
    <citation type="journal article" date="2008" name="Plant Cell">
        <title>Arabidopsis PEROXIN11c-e, FISSION1b, and DYNAMIN-RELATED PROTEIN3A cooperate in cell cycle-associated replication of peroxisomes.</title>
        <authorList>
            <person name="Lingard M.J."/>
            <person name="Gidda S.K."/>
            <person name="Bingham S."/>
            <person name="Rothstein S.J."/>
            <person name="Mullen R.T."/>
            <person name="Trelease R.N."/>
        </authorList>
    </citation>
    <scope>SUBUNIT</scope>
    <scope>INTERACTION WITH FIS1B</scope>
</reference>
<reference key="10">
    <citation type="journal article" date="2010" name="Plant Cell">
        <title>The Arabidopsis chloroplast division protein DYNAMIN-RELATED PROTEIN5B also mediates peroxisome division.</title>
        <authorList>
            <person name="Zhang X."/>
            <person name="Hu J."/>
        </authorList>
    </citation>
    <scope>INTERACTION WITH ARC5 AND FIS1B</scope>
    <scope>SUBCELLULAR LOCATION</scope>
    <scope>SELF-INTERACTION</scope>
</reference>